<organism>
    <name type="scientific">Burkholderia mallei (strain NCTC 10247)</name>
    <dbReference type="NCBI Taxonomy" id="320389"/>
    <lineage>
        <taxon>Bacteria</taxon>
        <taxon>Pseudomonadati</taxon>
        <taxon>Pseudomonadota</taxon>
        <taxon>Betaproteobacteria</taxon>
        <taxon>Burkholderiales</taxon>
        <taxon>Burkholderiaceae</taxon>
        <taxon>Burkholderia</taxon>
        <taxon>pseudomallei group</taxon>
    </lineage>
</organism>
<protein>
    <recommendedName>
        <fullName evidence="1">Isocitrate dehydrogenase kinase/phosphatase</fullName>
        <shortName evidence="1">IDH kinase/phosphatase</shortName>
        <shortName evidence="1">IDHK/P</shortName>
        <ecNumber evidence="1">2.7.11.5</ecNumber>
        <ecNumber evidence="1">3.1.3.-</ecNumber>
    </recommendedName>
</protein>
<accession>A3MNH1</accession>
<feature type="chain" id="PRO_1000046548" description="Isocitrate dehydrogenase kinase/phosphatase">
    <location>
        <begin position="1"/>
        <end position="603"/>
    </location>
</feature>
<feature type="active site" evidence="1">
    <location>
        <position position="383"/>
    </location>
</feature>
<feature type="binding site" evidence="1">
    <location>
        <begin position="327"/>
        <end position="333"/>
    </location>
    <ligand>
        <name>ATP</name>
        <dbReference type="ChEBI" id="CHEBI:30616"/>
    </ligand>
</feature>
<feature type="binding site" evidence="1">
    <location>
        <position position="348"/>
    </location>
    <ligand>
        <name>ATP</name>
        <dbReference type="ChEBI" id="CHEBI:30616"/>
    </ligand>
</feature>
<sequence>MNHFPKLLSSQIGFDVAQTILENFDRHYRIFREAAVEAKDLFERADWHGLQRLARERITSYDDRVRECVELLEDEYDAENIDNEVWPQIKLHYIGLLTSHRQPECAETFFNSVCCKILHRAYFNNDFIFVRPAISTEYIENDEPAAKPTYRAYYPGSEGLAATLERIVTNFQLNPPFEDLERDIACIMQAIHDEFGAFDEAVNFQIHVLSSLFYRNKTAYVVGRIINGDRVLPFAVPIRHARAGILALDTVLLRRDQLKIIFSFSHSYFLVDMNVPSAYVQFLRSIMPGKPKAEIYTSVGLQKQGKNLFYRDLLHHLSHSSDRFIVAPGIKGLVMLVFTLPSFPYVFKMIKDHFPPPKDTTREQIMAKYLLVKRHDRLGRMADTLEYSSVALPLARLDDALVRELEKEVPSLIEYEGENLVIKHLYIERRMVPLNLYLQNGSDAEIEHGVREYGNAVKELMQANIFPGDMLYKNFGVTRHGRVVFYDYDEIEYLTDCNVRRVPPPRNDEDEMSGEPWYTVGPHDIFPETYAPFLLGDPRVREHFLAHHADFFDPQLWQDSKDRLLRGELPDFFAYEPALRFCIRYPERFAPGDAADGGKLAAA</sequence>
<dbReference type="EC" id="2.7.11.5" evidence="1"/>
<dbReference type="EC" id="3.1.3.-" evidence="1"/>
<dbReference type="EMBL" id="CP000548">
    <property type="protein sequence ID" value="ABO04561.1"/>
    <property type="molecule type" value="Genomic_DNA"/>
</dbReference>
<dbReference type="RefSeq" id="WP_004525974.1">
    <property type="nucleotide sequence ID" value="NZ_CP007802.1"/>
</dbReference>
<dbReference type="SMR" id="A3MNH1"/>
<dbReference type="GeneID" id="93058891"/>
<dbReference type="KEGG" id="bmaz:BM44_975"/>
<dbReference type="KEGG" id="bmn:BMA10247_2279"/>
<dbReference type="PATRIC" id="fig|320389.8.peg.1083"/>
<dbReference type="GO" id="GO:0005737">
    <property type="term" value="C:cytoplasm"/>
    <property type="evidence" value="ECO:0007669"/>
    <property type="project" value="UniProtKB-SubCell"/>
</dbReference>
<dbReference type="GO" id="GO:0008772">
    <property type="term" value="F:[isocitrate dehydrogenase (NADP+)] kinase activity"/>
    <property type="evidence" value="ECO:0007669"/>
    <property type="project" value="UniProtKB-UniRule"/>
</dbReference>
<dbReference type="GO" id="GO:0016208">
    <property type="term" value="F:AMP binding"/>
    <property type="evidence" value="ECO:0007669"/>
    <property type="project" value="TreeGrafter"/>
</dbReference>
<dbReference type="GO" id="GO:0005524">
    <property type="term" value="F:ATP binding"/>
    <property type="evidence" value="ECO:0007669"/>
    <property type="project" value="UniProtKB-UniRule"/>
</dbReference>
<dbReference type="GO" id="GO:0004721">
    <property type="term" value="F:phosphoprotein phosphatase activity"/>
    <property type="evidence" value="ECO:0007669"/>
    <property type="project" value="UniProtKB-KW"/>
</dbReference>
<dbReference type="GO" id="GO:0004674">
    <property type="term" value="F:protein serine/threonine kinase activity"/>
    <property type="evidence" value="ECO:0007669"/>
    <property type="project" value="UniProtKB-KW"/>
</dbReference>
<dbReference type="GO" id="GO:0006006">
    <property type="term" value="P:glucose metabolic process"/>
    <property type="evidence" value="ECO:0007669"/>
    <property type="project" value="InterPro"/>
</dbReference>
<dbReference type="GO" id="GO:0006097">
    <property type="term" value="P:glyoxylate cycle"/>
    <property type="evidence" value="ECO:0007669"/>
    <property type="project" value="UniProtKB-UniRule"/>
</dbReference>
<dbReference type="GO" id="GO:0006099">
    <property type="term" value="P:tricarboxylic acid cycle"/>
    <property type="evidence" value="ECO:0007669"/>
    <property type="project" value="UniProtKB-UniRule"/>
</dbReference>
<dbReference type="HAMAP" id="MF_00747">
    <property type="entry name" value="AceK"/>
    <property type="match status" value="1"/>
</dbReference>
<dbReference type="InterPro" id="IPR046855">
    <property type="entry name" value="AceK_kinase"/>
</dbReference>
<dbReference type="InterPro" id="IPR046854">
    <property type="entry name" value="AceK_regulatory"/>
</dbReference>
<dbReference type="InterPro" id="IPR010452">
    <property type="entry name" value="Isocitrate_DH_AceK"/>
</dbReference>
<dbReference type="NCBIfam" id="NF002804">
    <property type="entry name" value="PRK02946.1"/>
    <property type="match status" value="1"/>
</dbReference>
<dbReference type="PANTHER" id="PTHR39559">
    <property type="match status" value="1"/>
</dbReference>
<dbReference type="PANTHER" id="PTHR39559:SF1">
    <property type="entry name" value="ISOCITRATE DEHYDROGENASE KINASE_PHOSPHATASE"/>
    <property type="match status" value="1"/>
</dbReference>
<dbReference type="Pfam" id="PF06315">
    <property type="entry name" value="AceK_kinase"/>
    <property type="match status" value="1"/>
</dbReference>
<dbReference type="Pfam" id="PF20423">
    <property type="entry name" value="AceK_regulatory"/>
    <property type="match status" value="1"/>
</dbReference>
<dbReference type="PIRSF" id="PIRSF000719">
    <property type="entry name" value="AceK"/>
    <property type="match status" value="1"/>
</dbReference>
<evidence type="ECO:0000255" key="1">
    <source>
        <dbReference type="HAMAP-Rule" id="MF_00747"/>
    </source>
</evidence>
<comment type="function">
    <text evidence="1">Bifunctional enzyme which can phosphorylate or dephosphorylate isocitrate dehydrogenase (IDH) on a specific serine residue. This is a regulatory mechanism which enables bacteria to bypass the Krebs cycle via the glyoxylate shunt in response to the source of carbon. When bacteria are grown on glucose, IDH is fully active and unphosphorylated, but when grown on acetate or ethanol, the activity of IDH declines drastically concomitant with its phosphorylation.</text>
</comment>
<comment type="catalytic activity">
    <reaction evidence="1">
        <text>L-seryl-[isocitrate dehydrogenase] + ATP = O-phospho-L-seryl-[isocitrate dehydrogenase] + ADP + H(+)</text>
        <dbReference type="Rhea" id="RHEA:43540"/>
        <dbReference type="Rhea" id="RHEA-COMP:10605"/>
        <dbReference type="Rhea" id="RHEA-COMP:10606"/>
        <dbReference type="ChEBI" id="CHEBI:15378"/>
        <dbReference type="ChEBI" id="CHEBI:29999"/>
        <dbReference type="ChEBI" id="CHEBI:30616"/>
        <dbReference type="ChEBI" id="CHEBI:83421"/>
        <dbReference type="ChEBI" id="CHEBI:456216"/>
        <dbReference type="EC" id="2.7.11.5"/>
    </reaction>
</comment>
<comment type="subcellular location">
    <subcellularLocation>
        <location evidence="1">Cytoplasm</location>
    </subcellularLocation>
</comment>
<comment type="similarity">
    <text evidence="1">Belongs to the AceK family.</text>
</comment>
<gene>
    <name evidence="1" type="primary">aceK</name>
    <name type="ordered locus">BMA10247_2279</name>
</gene>
<proteinExistence type="inferred from homology"/>
<name>ACEK_BURM7</name>
<reference key="1">
    <citation type="journal article" date="2010" name="Genome Biol. Evol.">
        <title>Continuing evolution of Burkholderia mallei through genome reduction and large-scale rearrangements.</title>
        <authorList>
            <person name="Losada L."/>
            <person name="Ronning C.M."/>
            <person name="DeShazer D."/>
            <person name="Woods D."/>
            <person name="Fedorova N."/>
            <person name="Kim H.S."/>
            <person name="Shabalina S.A."/>
            <person name="Pearson T.R."/>
            <person name="Brinkac L."/>
            <person name="Tan P."/>
            <person name="Nandi T."/>
            <person name="Crabtree J."/>
            <person name="Badger J."/>
            <person name="Beckstrom-Sternberg S."/>
            <person name="Saqib M."/>
            <person name="Schutzer S.E."/>
            <person name="Keim P."/>
            <person name="Nierman W.C."/>
        </authorList>
    </citation>
    <scope>NUCLEOTIDE SEQUENCE [LARGE SCALE GENOMIC DNA]</scope>
    <source>
        <strain>NCTC 10247</strain>
    </source>
</reference>
<keyword id="KW-0067">ATP-binding</keyword>
<keyword id="KW-0963">Cytoplasm</keyword>
<keyword id="KW-0329">Glyoxylate bypass</keyword>
<keyword id="KW-0378">Hydrolase</keyword>
<keyword id="KW-0418">Kinase</keyword>
<keyword id="KW-0547">Nucleotide-binding</keyword>
<keyword id="KW-0904">Protein phosphatase</keyword>
<keyword id="KW-0723">Serine/threonine-protein kinase</keyword>
<keyword id="KW-0808">Transferase</keyword>
<keyword id="KW-0816">Tricarboxylic acid cycle</keyword>